<proteinExistence type="evidence at transcript level"/>
<comment type="function">
    <text evidence="1">Ion channel inhibitor.</text>
</comment>
<comment type="subcellular location">
    <subcellularLocation>
        <location evidence="1">Secreted</location>
    </subcellularLocation>
</comment>
<comment type="tissue specificity">
    <text>Expressed by the venom gland.</text>
</comment>
<comment type="domain">
    <text evidence="1">The presence of a 'disulfide through disulfide knot' structurally defines this protein as a knottin.</text>
</comment>
<comment type="similarity">
    <text evidence="3">Belongs to the neurotoxin 10 (Hwtx-1) family. 13 (Hntx-13) subfamily.</text>
</comment>
<comment type="caution">
    <text evidence="3">While it is structurally defined as a knottin it lacks the conserved Cys residue in position 81.</text>
</comment>
<dbReference type="EMBL" id="GU293050">
    <property type="protein sequence ID" value="ADB56866.1"/>
    <property type="molecule type" value="mRNA"/>
</dbReference>
<dbReference type="SMR" id="D2Y2H3"/>
<dbReference type="ArachnoServer" id="AS001806">
    <property type="toxin name" value="U7-theraphotoxin-Hhn1k"/>
</dbReference>
<dbReference type="GO" id="GO:0005576">
    <property type="term" value="C:extracellular region"/>
    <property type="evidence" value="ECO:0007669"/>
    <property type="project" value="UniProtKB-SubCell"/>
</dbReference>
<dbReference type="GO" id="GO:0008200">
    <property type="term" value="F:ion channel inhibitor activity"/>
    <property type="evidence" value="ECO:0007669"/>
    <property type="project" value="InterPro"/>
</dbReference>
<dbReference type="GO" id="GO:0090729">
    <property type="term" value="F:toxin activity"/>
    <property type="evidence" value="ECO:0007669"/>
    <property type="project" value="UniProtKB-KW"/>
</dbReference>
<dbReference type="InterPro" id="IPR011696">
    <property type="entry name" value="Huwentoxin-1"/>
</dbReference>
<dbReference type="Pfam" id="PF07740">
    <property type="entry name" value="Toxin_12"/>
    <property type="match status" value="1"/>
</dbReference>
<dbReference type="SUPFAM" id="SSF57059">
    <property type="entry name" value="omega toxin-like"/>
    <property type="match status" value="1"/>
</dbReference>
<protein>
    <recommendedName>
        <fullName>U7-theraphotoxin-Hhn1k</fullName>
        <shortName>U7-TRTX-Hhn1k</shortName>
    </recommendedName>
    <alternativeName>
        <fullName>Hainantoxin-XIII-13</fullName>
        <shortName>HNTX-XIII-13</shortName>
    </alternativeName>
</protein>
<reference key="1">
    <citation type="journal article" date="2010" name="J. Proteome Res.">
        <title>Molecular diversification of peptide toxins from the tarantula Haplopelma hainanum (Ornithoctonus hainana) venom based on transcriptomic, peptidomic, and genomic analyses.</title>
        <authorList>
            <person name="Tang X."/>
            <person name="Zhang Y."/>
            <person name="Hu W."/>
            <person name="Xu D."/>
            <person name="Tao H."/>
            <person name="Yang X."/>
            <person name="Li Y."/>
            <person name="Jiang L."/>
            <person name="Liang S."/>
        </authorList>
    </citation>
    <scope>NUCLEOTIDE SEQUENCE [LARGE SCALE MRNA]</scope>
    <source>
        <tissue>Venom gland</tissue>
    </source>
</reference>
<feature type="signal peptide" evidence="2">
    <location>
        <begin position="1"/>
        <end position="19"/>
    </location>
</feature>
<feature type="propeptide" id="PRO_0000400713" evidence="1">
    <location>
        <begin position="20"/>
        <end position="50"/>
    </location>
</feature>
<feature type="peptide" id="PRO_0000400714" description="U7-theraphotoxin-Hhn1k">
    <location>
        <begin position="51"/>
        <end position="90"/>
    </location>
</feature>
<feature type="disulfide bond" evidence="1">
    <location>
        <begin position="51"/>
        <end position="65"/>
    </location>
</feature>
<feature type="disulfide bond" evidence="1">
    <location>
        <begin position="58"/>
        <end position="70"/>
    </location>
</feature>
<organism>
    <name type="scientific">Cyriopagopus hainanus</name>
    <name type="common">Chinese bird spider</name>
    <name type="synonym">Haplopelma hainanum</name>
    <dbReference type="NCBI Taxonomy" id="209901"/>
    <lineage>
        <taxon>Eukaryota</taxon>
        <taxon>Metazoa</taxon>
        <taxon>Ecdysozoa</taxon>
        <taxon>Arthropoda</taxon>
        <taxon>Chelicerata</taxon>
        <taxon>Arachnida</taxon>
        <taxon>Araneae</taxon>
        <taxon>Mygalomorphae</taxon>
        <taxon>Theraphosidae</taxon>
        <taxon>Haplopelma</taxon>
    </lineage>
</organism>
<keyword id="KW-1015">Disulfide bond</keyword>
<keyword id="KW-0872">Ion channel impairing toxin</keyword>
<keyword id="KW-0960">Knottin</keyword>
<keyword id="KW-0964">Secreted</keyword>
<keyword id="KW-0732">Signal</keyword>
<keyword id="KW-0800">Toxin</keyword>
<name>H13M1_CYRHA</name>
<accession>D2Y2H3</accession>
<sequence length="90" mass="10694">MKTAIFTVVLALAVFAVLSFGWEANEKALSEEFTELIHEKEAASETEARECRYFWGECHDHMPCCDWLVCRYKWPITYNIRVWNRTFPEK</sequence>
<evidence type="ECO:0000250" key="1"/>
<evidence type="ECO:0000255" key="2"/>
<evidence type="ECO:0000305" key="3"/>